<proteinExistence type="inferred from homology"/>
<evidence type="ECO:0000255" key="1">
    <source>
        <dbReference type="HAMAP-Rule" id="MF_00439"/>
    </source>
</evidence>
<feature type="chain" id="PRO_0000217831" description="Photosystem I assembly protein Ycf3">
    <location>
        <begin position="1"/>
        <end position="173"/>
    </location>
</feature>
<feature type="repeat" description="TPR 1">
    <location>
        <begin position="35"/>
        <end position="68"/>
    </location>
</feature>
<feature type="repeat" description="TPR 2">
    <location>
        <begin position="72"/>
        <end position="105"/>
    </location>
</feature>
<feature type="repeat" description="TPR 3">
    <location>
        <begin position="120"/>
        <end position="153"/>
    </location>
</feature>
<dbReference type="EMBL" id="BX548174">
    <property type="protein sequence ID" value="CAE18591.1"/>
    <property type="molecule type" value="Genomic_DNA"/>
</dbReference>
<dbReference type="RefSeq" id="WP_011131771.1">
    <property type="nucleotide sequence ID" value="NC_005072.1"/>
</dbReference>
<dbReference type="SMR" id="Q7V3E4"/>
<dbReference type="STRING" id="59919.PMM0132"/>
<dbReference type="KEGG" id="pmm:PMM0132"/>
<dbReference type="eggNOG" id="COG3063">
    <property type="taxonomic scope" value="Bacteria"/>
</dbReference>
<dbReference type="HOGENOM" id="CLU_141248_0_0_3"/>
<dbReference type="OrthoDB" id="9429505at2"/>
<dbReference type="Proteomes" id="UP000001026">
    <property type="component" value="Chromosome"/>
</dbReference>
<dbReference type="GO" id="GO:0031676">
    <property type="term" value="C:plasma membrane-derived thylakoid membrane"/>
    <property type="evidence" value="ECO:0007669"/>
    <property type="project" value="UniProtKB-SubCell"/>
</dbReference>
<dbReference type="GO" id="GO:0015979">
    <property type="term" value="P:photosynthesis"/>
    <property type="evidence" value="ECO:0007669"/>
    <property type="project" value="UniProtKB-UniRule"/>
</dbReference>
<dbReference type="Gene3D" id="1.25.40.10">
    <property type="entry name" value="Tetratricopeptide repeat domain"/>
    <property type="match status" value="1"/>
</dbReference>
<dbReference type="HAMAP" id="MF_00439">
    <property type="entry name" value="Ycf3"/>
    <property type="match status" value="1"/>
</dbReference>
<dbReference type="InterPro" id="IPR022818">
    <property type="entry name" value="PSI_Ycf3_assembly"/>
</dbReference>
<dbReference type="InterPro" id="IPR011990">
    <property type="entry name" value="TPR-like_helical_dom_sf"/>
</dbReference>
<dbReference type="InterPro" id="IPR019734">
    <property type="entry name" value="TPR_rpt"/>
</dbReference>
<dbReference type="InterPro" id="IPR051685">
    <property type="entry name" value="Ycf3/AcsC/BcsC/TPR_MFPF"/>
</dbReference>
<dbReference type="NCBIfam" id="NF002725">
    <property type="entry name" value="PRK02603.1"/>
    <property type="match status" value="1"/>
</dbReference>
<dbReference type="PANTHER" id="PTHR44943">
    <property type="entry name" value="CELLULOSE SYNTHASE OPERON PROTEIN C"/>
    <property type="match status" value="1"/>
</dbReference>
<dbReference type="PANTHER" id="PTHR44943:SF8">
    <property type="entry name" value="TPR REPEAT-CONTAINING PROTEIN MJ0263"/>
    <property type="match status" value="1"/>
</dbReference>
<dbReference type="Pfam" id="PF13181">
    <property type="entry name" value="TPR_8"/>
    <property type="match status" value="2"/>
</dbReference>
<dbReference type="SMART" id="SM00028">
    <property type="entry name" value="TPR"/>
    <property type="match status" value="2"/>
</dbReference>
<dbReference type="SUPFAM" id="SSF48452">
    <property type="entry name" value="TPR-like"/>
    <property type="match status" value="1"/>
</dbReference>
<dbReference type="PROSITE" id="PS50005">
    <property type="entry name" value="TPR"/>
    <property type="match status" value="2"/>
</dbReference>
<dbReference type="PROSITE" id="PS50293">
    <property type="entry name" value="TPR_REGION"/>
    <property type="match status" value="1"/>
</dbReference>
<protein>
    <recommendedName>
        <fullName evidence="1">Photosystem I assembly protein Ycf3</fullName>
    </recommendedName>
</protein>
<gene>
    <name evidence="1" type="primary">ycf3</name>
    <name type="ordered locus">PMM0132</name>
</gene>
<accession>Q7V3E4</accession>
<reference key="1">
    <citation type="journal article" date="2003" name="Nature">
        <title>Genome divergence in two Prochlorococcus ecotypes reflects oceanic niche differentiation.</title>
        <authorList>
            <person name="Rocap G."/>
            <person name="Larimer F.W."/>
            <person name="Lamerdin J.E."/>
            <person name="Malfatti S."/>
            <person name="Chain P."/>
            <person name="Ahlgren N.A."/>
            <person name="Arellano A."/>
            <person name="Coleman M."/>
            <person name="Hauser L."/>
            <person name="Hess W.R."/>
            <person name="Johnson Z.I."/>
            <person name="Land M.L."/>
            <person name="Lindell D."/>
            <person name="Post A.F."/>
            <person name="Regala W."/>
            <person name="Shah M."/>
            <person name="Shaw S.L."/>
            <person name="Steglich C."/>
            <person name="Sullivan M.B."/>
            <person name="Ting C.S."/>
            <person name="Tolonen A."/>
            <person name="Webb E.A."/>
            <person name="Zinser E.R."/>
            <person name="Chisholm S.W."/>
        </authorList>
    </citation>
    <scope>NUCLEOTIDE SEQUENCE [LARGE SCALE GENOMIC DNA]</scope>
    <source>
        <strain>CCMP1986 / NIES-2087 / MED4</strain>
    </source>
</reference>
<organism>
    <name type="scientific">Prochlorococcus marinus subsp. pastoris (strain CCMP1986 / NIES-2087 / MED4)</name>
    <dbReference type="NCBI Taxonomy" id="59919"/>
    <lineage>
        <taxon>Bacteria</taxon>
        <taxon>Bacillati</taxon>
        <taxon>Cyanobacteriota</taxon>
        <taxon>Cyanophyceae</taxon>
        <taxon>Synechococcales</taxon>
        <taxon>Prochlorococcaceae</taxon>
        <taxon>Prochlorococcus</taxon>
    </lineage>
</organism>
<sequence>MPNNQNRDNFIDKAFTVIAESIVKIMPIADKEKKAYIYYRDGLAAQNNGDYSEALDYYNESLLLEENKIDRGETLKNMAIIYMSNGEEDRSIETYQKALEENPKQPSCLKNIGLIYEKRGRFAEQNGDLDQRDMWFDKAAQVWSKAVRLYPGGYLDIENWLKTSGRSSIDIYL</sequence>
<comment type="function">
    <text evidence="1">Essential for the assembly of the photosystem I (PSI) complex. May act as a chaperone-like factor to guide the assembly of the PSI subunits.</text>
</comment>
<comment type="subcellular location">
    <subcellularLocation>
        <location evidence="1">Cellular thylakoid membrane</location>
        <topology evidence="1">Peripheral membrane protein</topology>
    </subcellularLocation>
</comment>
<comment type="similarity">
    <text evidence="1">Belongs to the Ycf3 family.</text>
</comment>
<keyword id="KW-0472">Membrane</keyword>
<keyword id="KW-0602">Photosynthesis</keyword>
<keyword id="KW-0677">Repeat</keyword>
<keyword id="KW-0793">Thylakoid</keyword>
<keyword id="KW-0802">TPR repeat</keyword>
<name>YCF3_PROMP</name>